<name>MCPA_PSEPK</name>
<evidence type="ECO:0000255" key="1"/>
<evidence type="ECO:0000255" key="2">
    <source>
        <dbReference type="PROSITE-ProRule" id="PRU00102"/>
    </source>
</evidence>
<evidence type="ECO:0000255" key="3">
    <source>
        <dbReference type="PROSITE-ProRule" id="PRU00284"/>
    </source>
</evidence>
<evidence type="ECO:0000269" key="4">
    <source>
    </source>
</evidence>
<evidence type="ECO:0000303" key="5">
    <source>
    </source>
</evidence>
<evidence type="ECO:0000305" key="6"/>
<evidence type="ECO:0000312" key="7">
    <source>
        <dbReference type="EMBL" id="AAN67862.1"/>
    </source>
</evidence>
<reference key="1">
    <citation type="journal article" date="2002" name="Environ. Microbiol.">
        <title>Complete genome sequence and comparative analysis of the metabolically versatile Pseudomonas putida KT2440.</title>
        <authorList>
            <person name="Nelson K.E."/>
            <person name="Weinel C."/>
            <person name="Paulsen I.T."/>
            <person name="Dodson R.J."/>
            <person name="Hilbert H."/>
            <person name="Martins dos Santos V.A.P."/>
            <person name="Fouts D.E."/>
            <person name="Gill S.R."/>
            <person name="Pop M."/>
            <person name="Holmes M."/>
            <person name="Brinkac L.M."/>
            <person name="Beanan M.J."/>
            <person name="DeBoy R.T."/>
            <person name="Daugherty S.C."/>
            <person name="Kolonay J.F."/>
            <person name="Madupu R."/>
            <person name="Nelson W.C."/>
            <person name="White O."/>
            <person name="Peterson J.D."/>
            <person name="Khouri H.M."/>
            <person name="Hance I."/>
            <person name="Chris Lee P."/>
            <person name="Holtzapple E.K."/>
            <person name="Scanlan D."/>
            <person name="Tran K."/>
            <person name="Moazzez A."/>
            <person name="Utterback T.R."/>
            <person name="Rizzo M."/>
            <person name="Lee K."/>
            <person name="Kosack D."/>
            <person name="Moestl D."/>
            <person name="Wedler H."/>
            <person name="Lauber J."/>
            <person name="Stjepandic D."/>
            <person name="Hoheisel J."/>
            <person name="Straetz M."/>
            <person name="Heim S."/>
            <person name="Kiewitz C."/>
            <person name="Eisen J.A."/>
            <person name="Timmis K.N."/>
            <person name="Duesterhoeft A."/>
            <person name="Tuemmler B."/>
            <person name="Fraser C.M."/>
        </authorList>
    </citation>
    <scope>NUCLEOTIDE SEQUENCE [LARGE SCALE GENOMIC DNA]</scope>
    <source>
        <strain>ATCC 47054 / DSM 6125 / CFBP 8728 / NCIMB 11950 / KT2440</strain>
    </source>
</reference>
<reference key="2">
    <citation type="journal article" date="2016" name="Environ. Microbiol.">
        <title>Assessment of the contribution of chemoreceptor-based signaling to biofilm formation.</title>
        <authorList>
            <person name="Corral-Lugo A."/>
            <person name="de la Torre J."/>
            <person name="Matilla M.A."/>
            <person name="Fernandez M."/>
            <person name="Morel B."/>
            <person name="Espinosa-Urgel M."/>
            <person name="Krell T."/>
        </authorList>
    </citation>
    <scope>FUNCTION AS A CHEMORECEPTOR</scope>
    <scope>DISRUPTION PHENOTYPE</scope>
    <source>
        <strain>ATCC 47054 / DSM 6125 / CFBP 8728 / NCIMB 11950 / KT2440</strain>
    </source>
</reference>
<gene>
    <name evidence="5" type="primary">mcpA</name>
    <name evidence="7" type="synonym">pctB</name>
    <name evidence="7" type="ordered locus">PP_2249</name>
</gene>
<sequence length="643" mass="68646">MSALRPPLIGSRSRNMNLKFRHKILLSACGVVVLAFALFTLYNDYLQRNTIRQNIEASVQQSGALTASSVQNWMSGRILVLENLAQDIGQQGAGDTLAGLIEQPSYTRNFLFTYLGQANGEFTQRPDAQMPAGYDPRQRPWYGAAANAGQTVLTAPYQGAVGGLMVTIATPVKSKRNGELIGVVGGDVTLDTLVEIINSVDFGGIGHAFLADANGQVIVSPNKDQVMKNLKDIYPGSNLRVAAGMQDVTLDGQDRIISFAPVAGLPSAQWYIGLSIDRDKAYAALSQFRTSAIIAMLIAVAAIAGLLGLLIPVLMSPLTTMGRAMRDIAEGEGDLTRRLAVQNKDEFGELATSFNRFVERIHASISEVSSATRLVHDLSEKVVSASNASIIGSEEQSMRTNSVAAAINELGAATQEIARNAADASQHASGASEQAHGGREVVEEAISAMTALSQRISESCAQIETLNASTDEIGKILDVIKGISQQTNLLALNAAIEAARAGEAGRGFAVVADEVRNLAHRTQESAEEIHRMITSLQVGSREAVHTMNTSQVSSEQTVQVANQAGERLASVTQRIGEIDGMNQSVATATEEQTAVVESLNLDITQINALNQQGVENLNETLRHCDQLAQQAGRLKQLVGSFRI</sequence>
<proteinExistence type="evidence at protein level"/>
<organism>
    <name type="scientific">Pseudomonas putida (strain ATCC 47054 / DSM 6125 / CFBP 8728 / NCIMB 11950 / KT2440)</name>
    <dbReference type="NCBI Taxonomy" id="160488"/>
    <lineage>
        <taxon>Bacteria</taxon>
        <taxon>Pseudomonadati</taxon>
        <taxon>Pseudomonadota</taxon>
        <taxon>Gammaproteobacteria</taxon>
        <taxon>Pseudomonadales</taxon>
        <taxon>Pseudomonadaceae</taxon>
        <taxon>Pseudomonas</taxon>
    </lineage>
</organism>
<comment type="function">
    <text evidence="4 6">Chemotactic-signal transducers respond to changes in the concentration of attractants and repellents in the environment, transduce a signal from the outside to the inside of the cell, and facilitate sensory adaptation through the variation of the level of methylation. McpA is a chemoreceptor that binds to 12 different L-amino acids and mediates chemotaxis toward these amino acids.</text>
</comment>
<comment type="subcellular location">
    <subcellularLocation>
        <location evidence="6">Cell membrane</location>
        <topology evidence="1">Multi-pass membrane protein</topology>
    </subcellularLocation>
</comment>
<comment type="disruption phenotype">
    <text evidence="4">Mutant shows different biofilm kinetics, reaching maximal biofilm formation earlier than wild type. Mutation does not affect the capacity to colonize the plant root.</text>
</comment>
<comment type="similarity">
    <text evidence="6">Belongs to the methyl-accepting chemotaxis (MCP) protein family.</text>
</comment>
<dbReference type="EMBL" id="AE015451">
    <property type="protein sequence ID" value="AAN67862.1"/>
    <property type="molecule type" value="Genomic_DNA"/>
</dbReference>
<dbReference type="RefSeq" id="NP_744398.1">
    <property type="nucleotide sequence ID" value="NC_002947.4"/>
</dbReference>
<dbReference type="SMR" id="Q88KP1"/>
<dbReference type="STRING" id="160488.PP_2249"/>
<dbReference type="PaxDb" id="160488-PP_2249"/>
<dbReference type="KEGG" id="ppu:PP_2249"/>
<dbReference type="PATRIC" id="fig|160488.4.peg.2374"/>
<dbReference type="eggNOG" id="COG0840">
    <property type="taxonomic scope" value="Bacteria"/>
</dbReference>
<dbReference type="HOGENOM" id="CLU_000445_107_19_6"/>
<dbReference type="OrthoDB" id="7021108at2"/>
<dbReference type="PhylomeDB" id="Q88KP1"/>
<dbReference type="BioCyc" id="PPUT160488:G1G01-2395-MONOMER"/>
<dbReference type="Proteomes" id="UP000000556">
    <property type="component" value="Chromosome"/>
</dbReference>
<dbReference type="GO" id="GO:0005886">
    <property type="term" value="C:plasma membrane"/>
    <property type="evidence" value="ECO:0007669"/>
    <property type="project" value="UniProtKB-SubCell"/>
</dbReference>
<dbReference type="GO" id="GO:0006935">
    <property type="term" value="P:chemotaxis"/>
    <property type="evidence" value="ECO:0007669"/>
    <property type="project" value="UniProtKB-KW"/>
</dbReference>
<dbReference type="GO" id="GO:0007165">
    <property type="term" value="P:signal transduction"/>
    <property type="evidence" value="ECO:0007669"/>
    <property type="project" value="UniProtKB-KW"/>
</dbReference>
<dbReference type="CDD" id="cd06225">
    <property type="entry name" value="HAMP"/>
    <property type="match status" value="1"/>
</dbReference>
<dbReference type="CDD" id="cd11386">
    <property type="entry name" value="MCP_signal"/>
    <property type="match status" value="1"/>
</dbReference>
<dbReference type="CDD" id="cd12913">
    <property type="entry name" value="PDC1_MCP_like"/>
    <property type="match status" value="1"/>
</dbReference>
<dbReference type="CDD" id="cd12912">
    <property type="entry name" value="PDC2_MCP_like"/>
    <property type="match status" value="1"/>
</dbReference>
<dbReference type="FunFam" id="1.10.287.950:FF:000001">
    <property type="entry name" value="Methyl-accepting chemotaxis sensory transducer"/>
    <property type="match status" value="1"/>
</dbReference>
<dbReference type="Gene3D" id="1.10.287.950">
    <property type="entry name" value="Methyl-accepting chemotaxis protein"/>
    <property type="match status" value="1"/>
</dbReference>
<dbReference type="Gene3D" id="3.30.450.20">
    <property type="entry name" value="PAS domain"/>
    <property type="match status" value="2"/>
</dbReference>
<dbReference type="InterPro" id="IPR033479">
    <property type="entry name" value="dCache_1"/>
</dbReference>
<dbReference type="InterPro" id="IPR003660">
    <property type="entry name" value="HAMP_dom"/>
</dbReference>
<dbReference type="InterPro" id="IPR004089">
    <property type="entry name" value="MCPsignal_dom"/>
</dbReference>
<dbReference type="InterPro" id="IPR029151">
    <property type="entry name" value="Sensor-like_sf"/>
</dbReference>
<dbReference type="PANTHER" id="PTHR32089:SF39">
    <property type="entry name" value="METHYL-ACCEPTING CHEMOTAXIS PROTEIN HLYB"/>
    <property type="match status" value="1"/>
</dbReference>
<dbReference type="PANTHER" id="PTHR32089">
    <property type="entry name" value="METHYL-ACCEPTING CHEMOTAXIS PROTEIN MCPB"/>
    <property type="match status" value="1"/>
</dbReference>
<dbReference type="Pfam" id="PF02743">
    <property type="entry name" value="dCache_1"/>
    <property type="match status" value="1"/>
</dbReference>
<dbReference type="Pfam" id="PF00672">
    <property type="entry name" value="HAMP"/>
    <property type="match status" value="1"/>
</dbReference>
<dbReference type="Pfam" id="PF00015">
    <property type="entry name" value="MCPsignal"/>
    <property type="match status" value="1"/>
</dbReference>
<dbReference type="SMART" id="SM00304">
    <property type="entry name" value="HAMP"/>
    <property type="match status" value="2"/>
</dbReference>
<dbReference type="SMART" id="SM00283">
    <property type="entry name" value="MA"/>
    <property type="match status" value="1"/>
</dbReference>
<dbReference type="SUPFAM" id="SSF58104">
    <property type="entry name" value="Methyl-accepting chemotaxis protein (MCP) signaling domain"/>
    <property type="match status" value="1"/>
</dbReference>
<dbReference type="SUPFAM" id="SSF103190">
    <property type="entry name" value="Sensory domain-like"/>
    <property type="match status" value="1"/>
</dbReference>
<dbReference type="PROSITE" id="PS50111">
    <property type="entry name" value="CHEMOTAXIS_TRANSDUC_2"/>
    <property type="match status" value="1"/>
</dbReference>
<dbReference type="PROSITE" id="PS50885">
    <property type="entry name" value="HAMP"/>
    <property type="match status" value="1"/>
</dbReference>
<protein>
    <recommendedName>
        <fullName evidence="6">Methyl-accepting chemotaxis protein McpA</fullName>
    </recommendedName>
</protein>
<accession>Q88KP1</accession>
<keyword id="KW-1003">Cell membrane</keyword>
<keyword id="KW-0145">Chemotaxis</keyword>
<keyword id="KW-0472">Membrane</keyword>
<keyword id="KW-0488">Methylation</keyword>
<keyword id="KW-1185">Reference proteome</keyword>
<keyword id="KW-0807">Transducer</keyword>
<keyword id="KW-0812">Transmembrane</keyword>
<keyword id="KW-1133">Transmembrane helix</keyword>
<feature type="chain" id="PRO_0000438504" description="Methyl-accepting chemotaxis protein McpA">
    <location>
        <begin position="1"/>
        <end position="643"/>
    </location>
</feature>
<feature type="transmembrane region" description="Helical" evidence="1">
    <location>
        <begin position="24"/>
        <end position="44"/>
    </location>
</feature>
<feature type="transmembrane region" description="Helical" evidence="1">
    <location>
        <begin position="293"/>
        <end position="313"/>
    </location>
</feature>
<feature type="domain" description="Cache" evidence="1">
    <location>
        <begin position="49"/>
        <end position="273"/>
    </location>
</feature>
<feature type="domain" description="HAMP" evidence="2">
    <location>
        <begin position="312"/>
        <end position="366"/>
    </location>
</feature>
<feature type="domain" description="Methyl-accepting transducer" evidence="3">
    <location>
        <begin position="371"/>
        <end position="607"/>
    </location>
</feature>